<sequence>MAFRGPEPWVSASLLRQRLKAEEKTLDLEFEVLSVGFNEAGRYALRLSAENPLQVGSGAGVQLQVNDGDPFPACSAITDVIEQQEPGQSLTLTRSKFIFTLPKGFCKNDGQHDAQLHVEALRLDEPLGRAAQRVGEAIFPIYPRPDQPRMNPKAQDHEDLYRYCGNLALLRASTDPTARHCGSLAYSVAFHVHRGPQPPVSDSPPRAGQPELMSPEEPLIASQSTEPEIGHLSPSKKETIMVTLHGATNLPACKDGSEPWPYVVVKSTSEEKNNQSSKAVTSVTSEPTRAPIWGDTVNVEIQAEDAGQEDVILKVVDNRKKQELLSYKIPIKYLRVFHPYHFELVKPTESGKADEATAKTQLYATVVRKSSFIPRYIGCNHMALEIFLRGVNEPLANNPNPIVVIARVVPNYKEFKVSQANRDLASVGLPITPLSFPIPSMMNFDVPRVSQNGCPQLSKPGGPPEQPLWNQSFLFQGRDGATSFSEDTALVLEYYSSTSMKGSQPWTLNQPLGISVLPLKSRLYQKMLTGKGLDGLHVERLPIMDTSLKTINDEAPTVALSFQLLSSERPENFLTPNNSKALPTLDPKILDKKLRTIQESWSKDTVSSTMDLSTSTPREAEEEPLVPEMSHDTEMNNYRRAMQKMAEDILSLRRQASILEGENRILRSRLAQQEEEEGQGKASEAQNTVSMKQKLLLSELDMKKLRDRVQHLQNELIRKNDREKELLLLYQAQQPQAALLKQYQGKLQKMKALEETVRHQEKVIEKMERVLEDRLQDRSKPPPLNRQQGKPYTGFPMLSASGLPLGSMGENLPVELYSVLLAENAKLRTELDKNRHQQAPIILQQQALPDLLSGTSDKFNLLAKLEHAQSRILSLESQLEDSARRWGREKQDLATRLQEQEKGFRHPSNSIIIEQPSALTHSMDLKQPSELEPLLPSSDSKLNKPLSPQKETANSQQT</sequence>
<organism>
    <name type="scientific">Homo sapiens</name>
    <name type="common">Human</name>
    <dbReference type="NCBI Taxonomy" id="9606"/>
    <lineage>
        <taxon>Eukaryota</taxon>
        <taxon>Metazoa</taxon>
        <taxon>Chordata</taxon>
        <taxon>Craniata</taxon>
        <taxon>Vertebrata</taxon>
        <taxon>Euteleostomi</taxon>
        <taxon>Mammalia</taxon>
        <taxon>Eutheria</taxon>
        <taxon>Euarchontoglires</taxon>
        <taxon>Primates</taxon>
        <taxon>Haplorrhini</taxon>
        <taxon>Catarrhini</taxon>
        <taxon>Hominidae</taxon>
        <taxon>Homo</taxon>
    </lineage>
</organism>
<protein>
    <recommendedName>
        <fullName>Coiled-coil domain-containing protein 33</fullName>
    </recommendedName>
    <alternativeName>
        <fullName>Cancer/testis antigen 61</fullName>
        <shortName>CT61</shortName>
    </alternativeName>
</protein>
<accession>Q8N5R6</accession>
<accession>A8K3U4</accession>
<accession>A8MPQ6</accession>
<accession>A8MV61</accession>
<accession>A8MVU9</accession>
<accession>B3KQ49</accession>
<accession>Q8TAX6</accession>
<accession>Q9H5Q6</accession>
<proteinExistence type="evidence at protein level"/>
<keyword id="KW-0025">Alternative splicing</keyword>
<keyword id="KW-0175">Coiled coil</keyword>
<keyword id="KW-1267">Proteomics identification</keyword>
<keyword id="KW-1185">Reference proteome</keyword>
<reference key="1">
    <citation type="journal article" date="2004" name="Nat. Genet.">
        <title>Complete sequencing and characterization of 21,243 full-length human cDNAs.</title>
        <authorList>
            <person name="Ota T."/>
            <person name="Suzuki Y."/>
            <person name="Nishikawa T."/>
            <person name="Otsuki T."/>
            <person name="Sugiyama T."/>
            <person name="Irie R."/>
            <person name="Wakamatsu A."/>
            <person name="Hayashi K."/>
            <person name="Sato H."/>
            <person name="Nagai K."/>
            <person name="Kimura K."/>
            <person name="Makita H."/>
            <person name="Sekine M."/>
            <person name="Obayashi M."/>
            <person name="Nishi T."/>
            <person name="Shibahara T."/>
            <person name="Tanaka T."/>
            <person name="Ishii S."/>
            <person name="Yamamoto J."/>
            <person name="Saito K."/>
            <person name="Kawai Y."/>
            <person name="Isono Y."/>
            <person name="Nakamura Y."/>
            <person name="Nagahari K."/>
            <person name="Murakami K."/>
            <person name="Yasuda T."/>
            <person name="Iwayanagi T."/>
            <person name="Wagatsuma M."/>
            <person name="Shiratori A."/>
            <person name="Sudo H."/>
            <person name="Hosoiri T."/>
            <person name="Kaku Y."/>
            <person name="Kodaira H."/>
            <person name="Kondo H."/>
            <person name="Sugawara M."/>
            <person name="Takahashi M."/>
            <person name="Kanda K."/>
            <person name="Yokoi T."/>
            <person name="Furuya T."/>
            <person name="Kikkawa E."/>
            <person name="Omura Y."/>
            <person name="Abe K."/>
            <person name="Kamihara K."/>
            <person name="Katsuta N."/>
            <person name="Sato K."/>
            <person name="Tanikawa M."/>
            <person name="Yamazaki M."/>
            <person name="Ninomiya K."/>
            <person name="Ishibashi T."/>
            <person name="Yamashita H."/>
            <person name="Murakawa K."/>
            <person name="Fujimori K."/>
            <person name="Tanai H."/>
            <person name="Kimata M."/>
            <person name="Watanabe M."/>
            <person name="Hiraoka S."/>
            <person name="Chiba Y."/>
            <person name="Ishida S."/>
            <person name="Ono Y."/>
            <person name="Takiguchi S."/>
            <person name="Watanabe S."/>
            <person name="Yosida M."/>
            <person name="Hotuta T."/>
            <person name="Kusano J."/>
            <person name="Kanehori K."/>
            <person name="Takahashi-Fujii A."/>
            <person name="Hara H."/>
            <person name="Tanase T.-O."/>
            <person name="Nomura Y."/>
            <person name="Togiya S."/>
            <person name="Komai F."/>
            <person name="Hara R."/>
            <person name="Takeuchi K."/>
            <person name="Arita M."/>
            <person name="Imose N."/>
            <person name="Musashino K."/>
            <person name="Yuuki H."/>
            <person name="Oshima A."/>
            <person name="Sasaki N."/>
            <person name="Aotsuka S."/>
            <person name="Yoshikawa Y."/>
            <person name="Matsunawa H."/>
            <person name="Ichihara T."/>
            <person name="Shiohata N."/>
            <person name="Sano S."/>
            <person name="Moriya S."/>
            <person name="Momiyama H."/>
            <person name="Satoh N."/>
            <person name="Takami S."/>
            <person name="Terashima Y."/>
            <person name="Suzuki O."/>
            <person name="Nakagawa S."/>
            <person name="Senoh A."/>
            <person name="Mizoguchi H."/>
            <person name="Goto Y."/>
            <person name="Shimizu F."/>
            <person name="Wakebe H."/>
            <person name="Hishigaki H."/>
            <person name="Watanabe T."/>
            <person name="Sugiyama A."/>
            <person name="Takemoto M."/>
            <person name="Kawakami B."/>
            <person name="Yamazaki M."/>
            <person name="Watanabe K."/>
            <person name="Kumagai A."/>
            <person name="Itakura S."/>
            <person name="Fukuzumi Y."/>
            <person name="Fujimori Y."/>
            <person name="Komiyama M."/>
            <person name="Tashiro H."/>
            <person name="Tanigami A."/>
            <person name="Fujiwara T."/>
            <person name="Ono T."/>
            <person name="Yamada K."/>
            <person name="Fujii Y."/>
            <person name="Ozaki K."/>
            <person name="Hirao M."/>
            <person name="Ohmori Y."/>
            <person name="Kawabata A."/>
            <person name="Hikiji T."/>
            <person name="Kobatake N."/>
            <person name="Inagaki H."/>
            <person name="Ikema Y."/>
            <person name="Okamoto S."/>
            <person name="Okitani R."/>
            <person name="Kawakami T."/>
            <person name="Noguchi S."/>
            <person name="Itoh T."/>
            <person name="Shigeta K."/>
            <person name="Senba T."/>
            <person name="Matsumura K."/>
            <person name="Nakajima Y."/>
            <person name="Mizuno T."/>
            <person name="Morinaga M."/>
            <person name="Sasaki M."/>
            <person name="Togashi T."/>
            <person name="Oyama M."/>
            <person name="Hata H."/>
            <person name="Watanabe M."/>
            <person name="Komatsu T."/>
            <person name="Mizushima-Sugano J."/>
            <person name="Satoh T."/>
            <person name="Shirai Y."/>
            <person name="Takahashi Y."/>
            <person name="Nakagawa K."/>
            <person name="Okumura K."/>
            <person name="Nagase T."/>
            <person name="Nomura N."/>
            <person name="Kikuchi H."/>
            <person name="Masuho Y."/>
            <person name="Yamashita R."/>
            <person name="Nakai K."/>
            <person name="Yada T."/>
            <person name="Nakamura Y."/>
            <person name="Ohara O."/>
            <person name="Isogai T."/>
            <person name="Sugano S."/>
        </authorList>
    </citation>
    <scope>NUCLEOTIDE SEQUENCE [LARGE SCALE MRNA] (ISOFORMS 4 AND 6)</scope>
    <scope>VARIANT ASN-683</scope>
    <source>
        <tissue>Lung</tissue>
        <tissue>Testis</tissue>
    </source>
</reference>
<reference key="2">
    <citation type="journal article" date="2006" name="Nature">
        <title>Analysis of the DNA sequence and duplication history of human chromosome 15.</title>
        <authorList>
            <person name="Zody M.C."/>
            <person name="Garber M."/>
            <person name="Sharpe T."/>
            <person name="Young S.K."/>
            <person name="Rowen L."/>
            <person name="O'Neill K."/>
            <person name="Whittaker C.A."/>
            <person name="Kamal M."/>
            <person name="Chang J.L."/>
            <person name="Cuomo C.A."/>
            <person name="Dewar K."/>
            <person name="FitzGerald M.G."/>
            <person name="Kodira C.D."/>
            <person name="Madan A."/>
            <person name="Qin S."/>
            <person name="Yang X."/>
            <person name="Abbasi N."/>
            <person name="Abouelleil A."/>
            <person name="Arachchi H.M."/>
            <person name="Baradarani L."/>
            <person name="Birditt B."/>
            <person name="Bloom S."/>
            <person name="Bloom T."/>
            <person name="Borowsky M.L."/>
            <person name="Burke J."/>
            <person name="Butler J."/>
            <person name="Cook A."/>
            <person name="DeArellano K."/>
            <person name="DeCaprio D."/>
            <person name="Dorris L. III"/>
            <person name="Dors M."/>
            <person name="Eichler E.E."/>
            <person name="Engels R."/>
            <person name="Fahey J."/>
            <person name="Fleetwood P."/>
            <person name="Friedman C."/>
            <person name="Gearin G."/>
            <person name="Hall J.L."/>
            <person name="Hensley G."/>
            <person name="Johnson E."/>
            <person name="Jones C."/>
            <person name="Kamat A."/>
            <person name="Kaur A."/>
            <person name="Locke D.P."/>
            <person name="Madan A."/>
            <person name="Munson G."/>
            <person name="Jaffe D.B."/>
            <person name="Lui A."/>
            <person name="Macdonald P."/>
            <person name="Mauceli E."/>
            <person name="Naylor J.W."/>
            <person name="Nesbitt R."/>
            <person name="Nicol R."/>
            <person name="O'Leary S.B."/>
            <person name="Ratcliffe A."/>
            <person name="Rounsley S."/>
            <person name="She X."/>
            <person name="Sneddon K.M.B."/>
            <person name="Stewart S."/>
            <person name="Sougnez C."/>
            <person name="Stone S.M."/>
            <person name="Topham K."/>
            <person name="Vincent D."/>
            <person name="Wang S."/>
            <person name="Zimmer A.R."/>
            <person name="Birren B.W."/>
            <person name="Hood L."/>
            <person name="Lander E.S."/>
            <person name="Nusbaum C."/>
        </authorList>
    </citation>
    <scope>NUCLEOTIDE SEQUENCE [LARGE SCALE GENOMIC DNA]</scope>
</reference>
<reference key="3">
    <citation type="journal article" date="2004" name="Genome Res.">
        <title>The status, quality, and expansion of the NIH full-length cDNA project: the Mammalian Gene Collection (MGC).</title>
        <authorList>
            <consortium name="The MGC Project Team"/>
        </authorList>
    </citation>
    <scope>NUCLEOTIDE SEQUENCE [LARGE SCALE MRNA] OF 324-958 (ISOFORM 2)</scope>
    <source>
        <tissue>Brain</tissue>
    </source>
</reference>
<name>CCD33_HUMAN</name>
<gene>
    <name type="primary">CCDC33</name>
</gene>
<dbReference type="EMBL" id="AK057417">
    <property type="protein sequence ID" value="BAG51911.1"/>
    <property type="molecule type" value="mRNA"/>
</dbReference>
<dbReference type="EMBL" id="AK026821">
    <property type="protein sequence ID" value="BAB15564.1"/>
    <property type="molecule type" value="mRNA"/>
</dbReference>
<dbReference type="EMBL" id="AK290709">
    <property type="protein sequence ID" value="BAF83398.1"/>
    <property type="molecule type" value="mRNA"/>
</dbReference>
<dbReference type="EMBL" id="AC023300">
    <property type="status" value="NOT_ANNOTATED_CDS"/>
    <property type="molecule type" value="Genomic_DNA"/>
</dbReference>
<dbReference type="EMBL" id="AC090826">
    <property type="status" value="NOT_ANNOTATED_CDS"/>
    <property type="molecule type" value="Genomic_DNA"/>
</dbReference>
<dbReference type="EMBL" id="BC031684">
    <property type="protein sequence ID" value="AAH31684.1"/>
    <property type="molecule type" value="mRNA"/>
</dbReference>
<dbReference type="CCDS" id="CCDS42058.1">
    <molecule id="Q8N5R6-6"/>
</dbReference>
<dbReference type="CCDS" id="CCDS42059.1">
    <molecule id="Q8N5R6-5"/>
</dbReference>
<dbReference type="CCDS" id="CCDS73753.1">
    <molecule id="Q8N5R6-4"/>
</dbReference>
<dbReference type="RefSeq" id="NP_001274110.1">
    <molecule id="Q8N5R6-4"/>
    <property type="nucleotide sequence ID" value="NM_001287181.2"/>
</dbReference>
<dbReference type="RefSeq" id="NP_079331.3">
    <molecule id="Q8N5R6-6"/>
    <property type="nucleotide sequence ID" value="NM_025055.4"/>
</dbReference>
<dbReference type="RefSeq" id="NP_877592.2">
    <molecule id="Q8N5R6-5"/>
    <property type="nucleotide sequence ID" value="NM_182791.4"/>
</dbReference>
<dbReference type="SMR" id="Q8N5R6"/>
<dbReference type="BioGRID" id="123126">
    <property type="interactions" value="192"/>
</dbReference>
<dbReference type="FunCoup" id="Q8N5R6">
    <property type="interactions" value="123"/>
</dbReference>
<dbReference type="IntAct" id="Q8N5R6">
    <property type="interactions" value="65"/>
</dbReference>
<dbReference type="MINT" id="Q8N5R6"/>
<dbReference type="STRING" id="9606.ENSP00000381795"/>
<dbReference type="GlyGen" id="Q8N5R6">
    <property type="glycosylation" value="2 sites, 1 O-linked glycan (2 sites)"/>
</dbReference>
<dbReference type="iPTMnet" id="Q8N5R6"/>
<dbReference type="PhosphoSitePlus" id="Q8N5R6"/>
<dbReference type="BioMuta" id="CCDC33"/>
<dbReference type="DMDM" id="205646145"/>
<dbReference type="MassIVE" id="Q8N5R6"/>
<dbReference type="PaxDb" id="9606-ENSP00000381795"/>
<dbReference type="PeptideAtlas" id="Q8N5R6"/>
<dbReference type="ProteomicsDB" id="72082">
    <molecule id="Q8N5R6-1"/>
</dbReference>
<dbReference type="ProteomicsDB" id="72083">
    <molecule id="Q8N5R6-2"/>
</dbReference>
<dbReference type="ProteomicsDB" id="72084">
    <molecule id="Q8N5R6-4"/>
</dbReference>
<dbReference type="ProteomicsDB" id="72085">
    <molecule id="Q8N5R6-5"/>
</dbReference>
<dbReference type="ProteomicsDB" id="72086">
    <molecule id="Q8N5R6-6"/>
</dbReference>
<dbReference type="Antibodypedia" id="52555">
    <property type="antibodies" value="51 antibodies from 14 providers"/>
</dbReference>
<dbReference type="DNASU" id="80125"/>
<dbReference type="Ensembl" id="ENST00000268082.4">
    <molecule id="Q8N5R6-5"/>
    <property type="protein sequence ID" value="ENSP00000268082.4"/>
    <property type="gene ID" value="ENSG00000140481.15"/>
</dbReference>
<dbReference type="Ensembl" id="ENST00000321374.9">
    <molecule id="Q8N5R6-4"/>
    <property type="protein sequence ID" value="ENSP00000325661.5"/>
    <property type="gene ID" value="ENSG00000140481.15"/>
</dbReference>
<dbReference type="Ensembl" id="ENST00000398814.8">
    <molecule id="Q8N5R6-6"/>
    <property type="protein sequence ID" value="ENSP00000381795.3"/>
    <property type="gene ID" value="ENSG00000140481.15"/>
</dbReference>
<dbReference type="Ensembl" id="ENST00000558821.5">
    <molecule id="Q8N5R6-4"/>
    <property type="protein sequence ID" value="ENSP00000452817.1"/>
    <property type="gene ID" value="ENSG00000140481.15"/>
</dbReference>
<dbReference type="Ensembl" id="ENST00000672175.1">
    <molecule id="Q8N5R6-6"/>
    <property type="protein sequence ID" value="ENSP00000500783.1"/>
    <property type="gene ID" value="ENSG00000288407.1"/>
</dbReference>
<dbReference type="Ensembl" id="ENST00000672263.1">
    <molecule id="Q8N5R6-4"/>
    <property type="protein sequence ID" value="ENSP00000500591.1"/>
    <property type="gene ID" value="ENSG00000288407.1"/>
</dbReference>
<dbReference type="Ensembl" id="ENST00000673214.1">
    <molecule id="Q8N5R6-5"/>
    <property type="protein sequence ID" value="ENSP00000500272.1"/>
    <property type="gene ID" value="ENSG00000288407.1"/>
</dbReference>
<dbReference type="Ensembl" id="ENST00000673517.1">
    <molecule id="Q8N5R6-4"/>
    <property type="protein sequence ID" value="ENSP00000500223.1"/>
    <property type="gene ID" value="ENSG00000288407.1"/>
</dbReference>
<dbReference type="GeneID" id="80125"/>
<dbReference type="KEGG" id="hsa:80125"/>
<dbReference type="MANE-Select" id="ENST00000398814.8">
    <molecule id="Q8N5R6-6"/>
    <property type="protein sequence ID" value="ENSP00000381795.3"/>
    <property type="RefSeq nucleotide sequence ID" value="NM_025055.5"/>
    <property type="RefSeq protein sequence ID" value="NP_079331.3"/>
</dbReference>
<dbReference type="UCSC" id="uc002axo.4">
    <molecule id="Q8N5R6-1"/>
    <property type="organism name" value="human"/>
</dbReference>
<dbReference type="AGR" id="HGNC:26552"/>
<dbReference type="CTD" id="80125"/>
<dbReference type="DisGeNET" id="80125"/>
<dbReference type="GeneCards" id="CCDC33"/>
<dbReference type="HGNC" id="HGNC:26552">
    <property type="gene designation" value="CCDC33"/>
</dbReference>
<dbReference type="HPA" id="ENSG00000140481">
    <property type="expression patterns" value="Group enriched (fallopian tube, testis)"/>
</dbReference>
<dbReference type="MIM" id="618525">
    <property type="type" value="gene"/>
</dbReference>
<dbReference type="neXtProt" id="NX_Q8N5R6"/>
<dbReference type="OpenTargets" id="ENSG00000140481"/>
<dbReference type="PharmGKB" id="PA142672188"/>
<dbReference type="VEuPathDB" id="HostDB:ENSG00000140481"/>
<dbReference type="eggNOG" id="KOG3544">
    <property type="taxonomic scope" value="Eukaryota"/>
</dbReference>
<dbReference type="GeneTree" id="ENSGT00390000017366"/>
<dbReference type="HOGENOM" id="CLU_067728_0_0_1"/>
<dbReference type="InParanoid" id="Q8N5R6"/>
<dbReference type="OMA" id="RDTEMNN"/>
<dbReference type="OrthoDB" id="552574at2759"/>
<dbReference type="PAN-GO" id="Q8N5R6">
    <property type="GO annotations" value="1 GO annotation based on evolutionary models"/>
</dbReference>
<dbReference type="PhylomeDB" id="Q8N5R6"/>
<dbReference type="TreeFam" id="TF328975"/>
<dbReference type="PathwayCommons" id="Q8N5R6"/>
<dbReference type="SignaLink" id="Q8N5R6"/>
<dbReference type="BioGRID-ORCS" id="80125">
    <property type="hits" value="15 hits in 1144 CRISPR screens"/>
</dbReference>
<dbReference type="ChiTaRS" id="CCDC33">
    <property type="organism name" value="human"/>
</dbReference>
<dbReference type="GenomeRNAi" id="80125"/>
<dbReference type="Pharos" id="Q8N5R6">
    <property type="development level" value="Tdark"/>
</dbReference>
<dbReference type="PRO" id="PR:Q8N5R6"/>
<dbReference type="Proteomes" id="UP000005640">
    <property type="component" value="Chromosome 15"/>
</dbReference>
<dbReference type="RNAct" id="Q8N5R6">
    <property type="molecule type" value="protein"/>
</dbReference>
<dbReference type="Bgee" id="ENSG00000140481">
    <property type="expression patterns" value="Expressed in right uterine tube and 77 other cell types or tissues"/>
</dbReference>
<dbReference type="ExpressionAtlas" id="Q8N5R6">
    <property type="expression patterns" value="baseline and differential"/>
</dbReference>
<dbReference type="GO" id="GO:0005777">
    <property type="term" value="C:peroxisome"/>
    <property type="evidence" value="ECO:0000318"/>
    <property type="project" value="GO_Central"/>
</dbReference>
<dbReference type="CDD" id="cd00030">
    <property type="entry name" value="C2"/>
    <property type="match status" value="1"/>
</dbReference>
<dbReference type="Gene3D" id="2.60.40.150">
    <property type="entry name" value="C2 domain"/>
    <property type="match status" value="1"/>
</dbReference>
<dbReference type="InterPro" id="IPR000008">
    <property type="entry name" value="C2_dom"/>
</dbReference>
<dbReference type="InterPro" id="IPR035892">
    <property type="entry name" value="C2_domain_sf"/>
</dbReference>
<dbReference type="InterPro" id="IPR039889">
    <property type="entry name" value="CCD33"/>
</dbReference>
<dbReference type="PANTHER" id="PTHR21623:SF2">
    <property type="entry name" value="COILED-COIL DOMAIN-CONTAINING PROTEIN 33"/>
    <property type="match status" value="1"/>
</dbReference>
<dbReference type="PANTHER" id="PTHR21623">
    <property type="entry name" value="SPERIOLIN-BINDING FACTOR"/>
    <property type="match status" value="1"/>
</dbReference>
<dbReference type="Pfam" id="PF00168">
    <property type="entry name" value="C2"/>
    <property type="match status" value="1"/>
</dbReference>
<dbReference type="SUPFAM" id="SSF49562">
    <property type="entry name" value="C2 domain (Calcium/lipid-binding domain, CaLB)"/>
    <property type="match status" value="1"/>
</dbReference>
<dbReference type="PROSITE" id="PS50004">
    <property type="entry name" value="C2"/>
    <property type="match status" value="1"/>
</dbReference>
<feature type="chain" id="PRO_0000307643" description="Coiled-coil domain-containing protein 33">
    <location>
        <begin position="1"/>
        <end position="958"/>
    </location>
</feature>
<feature type="domain" description="C2" evidence="2">
    <location>
        <begin position="214"/>
        <end position="353"/>
    </location>
</feature>
<feature type="region of interest" description="Disordered" evidence="3">
    <location>
        <begin position="602"/>
        <end position="628"/>
    </location>
</feature>
<feature type="region of interest" description="Disordered" evidence="3">
    <location>
        <begin position="899"/>
        <end position="958"/>
    </location>
</feature>
<feature type="coiled-coil region" evidence="1">
    <location>
        <begin position="632"/>
        <end position="774"/>
    </location>
</feature>
<feature type="coiled-coil region" evidence="1">
    <location>
        <begin position="859"/>
        <end position="899"/>
    </location>
</feature>
<feature type="compositionally biased region" description="Polar residues" evidence="3">
    <location>
        <begin position="602"/>
        <end position="617"/>
    </location>
</feature>
<feature type="compositionally biased region" description="Polar residues" evidence="3">
    <location>
        <begin position="907"/>
        <end position="920"/>
    </location>
</feature>
<feature type="compositionally biased region" description="Polar residues" evidence="3">
    <location>
        <begin position="949"/>
        <end position="958"/>
    </location>
</feature>
<feature type="splice variant" id="VSP_028755" description="In isoform 4 and isoform 5." evidence="5">
    <location>
        <begin position="1"/>
        <end position="610"/>
    </location>
</feature>
<feature type="splice variant" id="VSP_040258" description="In isoform 6." evidence="5">
    <location>
        <begin position="1"/>
        <end position="203"/>
    </location>
</feature>
<feature type="splice variant" id="VSP_040259" description="In isoform 6." evidence="5">
    <original>PPRAGQPELMS</original>
    <variation>MGLKNKKNTED</variation>
    <location>
        <begin position="204"/>
        <end position="214"/>
    </location>
</feature>
<feature type="splice variant" id="VSP_028756" description="In isoform 4 and isoform 5." evidence="5">
    <original>DLSTSTPREAEEEPLVPEMSHDT</original>
    <variation>MGEPGPPSPPAPKAAPGLIDSFS</variation>
    <location>
        <begin position="611"/>
        <end position="633"/>
    </location>
</feature>
<feature type="splice variant" id="VSP_028757" description="In isoform 2 and isoform 5." evidence="6">
    <original>P</original>
    <variation>PVDPGELGAGGDLTERLQETHGPGHSECTETLPAQ</variation>
    <location>
        <position position="849"/>
    </location>
</feature>
<feature type="splice variant" id="VSP_028758" description="In isoform 2." evidence="6">
    <original>SALTHSMDLKQPSELEPLLPSSDSKLNKPLSPQKETANSQQT</original>
    <variation>PYSLPPAPGASIFGKPRATVDPGGWREEAFQSRGQGDGPLPDPEKKQGHQRPALLGNTREACPFHLPQNIYHV</variation>
    <location>
        <begin position="917"/>
        <end position="958"/>
    </location>
</feature>
<feature type="splice variant" id="VSP_028759" description="In isoform 4 and isoform 5." evidence="5">
    <original>SALTHSMDLKQPSELEPLLPSSDSKLNKPLSPQKETANSQQT</original>
    <variation>VSDPPGVAPRGSGGGAGSHRTPKVTGP</variation>
    <location>
        <begin position="917"/>
        <end position="958"/>
    </location>
</feature>
<feature type="sequence variant" id="VAR_045602" description="In dbSNP:rs2277603.">
    <original>M</original>
    <variation>V</variation>
    <location>
        <position position="635"/>
    </location>
</feature>
<feature type="sequence variant" id="VAR_045603" description="In dbSNP:rs2277604.">
    <original>R</original>
    <variation>L</variation>
    <location>
        <position position="640"/>
    </location>
</feature>
<feature type="sequence variant" id="VAR_036625" description="In dbSNP:rs1564782." evidence="4">
    <original>S</original>
    <variation>N</variation>
    <location>
        <position position="683"/>
    </location>
</feature>
<feature type="sequence conflict" description="In Ref. 1; BAG51911." evidence="7" ref="1">
    <location>
        <position position="237"/>
    </location>
</feature>
<feature type="sequence conflict" description="In Ref. 1; BAG51911." evidence="7" ref="1">
    <original>K</original>
    <variation>E</variation>
    <location>
        <position position="531"/>
    </location>
</feature>
<feature type="sequence conflict" description="In Ref. 1; BAF83398." evidence="7" ref="1">
    <original>L</original>
    <variation>P</variation>
    <location>
        <position position="775"/>
    </location>
</feature>
<evidence type="ECO:0000255" key="1"/>
<evidence type="ECO:0000255" key="2">
    <source>
        <dbReference type="PROSITE-ProRule" id="PRU00041"/>
    </source>
</evidence>
<evidence type="ECO:0000256" key="3">
    <source>
        <dbReference type="SAM" id="MobiDB-lite"/>
    </source>
</evidence>
<evidence type="ECO:0000269" key="4">
    <source>
    </source>
</evidence>
<evidence type="ECO:0000303" key="5">
    <source>
    </source>
</evidence>
<evidence type="ECO:0000303" key="6">
    <source>
    </source>
</evidence>
<evidence type="ECO:0000305" key="7"/>
<comment type="interaction">
    <interactant intactId="EBI-740841">
        <id>Q8N5R6</id>
    </interactant>
    <interactant intactId="EBI-7519711">
        <id>P53673</id>
        <label>CRYBA4</label>
    </interactant>
    <organismsDiffer>false</organismsDiffer>
    <experiments>3</experiments>
</comment>
<comment type="interaction">
    <interactant intactId="EBI-740841">
        <id>Q8N5R6</id>
    </interactant>
    <interactant intactId="EBI-489887">
        <id>P50402</id>
        <label>EMD</label>
    </interactant>
    <organismsDiffer>false</organismsDiffer>
    <experiments>3</experiments>
</comment>
<comment type="interaction">
    <interactant intactId="EBI-740841">
        <id>Q8N5R6</id>
    </interactant>
    <interactant intactId="EBI-747754">
        <id>P28799</id>
        <label>GRN</label>
    </interactant>
    <organismsDiffer>false</organismsDiffer>
    <experiments>3</experiments>
</comment>
<comment type="interaction">
    <interactant intactId="EBI-740841">
        <id>Q8N5R6</id>
    </interactant>
    <interactant intactId="EBI-743290">
        <id>Q96ED9</id>
        <label>HOOK2</label>
    </interactant>
    <organismsDiffer>false</organismsDiffer>
    <experiments>2</experiments>
</comment>
<comment type="interaction">
    <interactant intactId="EBI-740841">
        <id>Q8N5R6</id>
    </interactant>
    <interactant intactId="EBI-744248">
        <id>P40692</id>
        <label>MLH1</label>
    </interactant>
    <organismsDiffer>false</organismsDiffer>
    <experiments>4</experiments>
</comment>
<comment type="interaction">
    <interactant intactId="EBI-740841">
        <id>Q8N5R6</id>
    </interactant>
    <interactant intactId="EBI-1567797">
        <id>Q8WWY3</id>
        <label>PRPF31</label>
    </interactant>
    <organismsDiffer>false</organismsDiffer>
    <experiments>3</experiments>
</comment>
<comment type="interaction">
    <interactant intactId="EBI-740841">
        <id>Q8N5R6</id>
    </interactant>
    <interactant intactId="EBI-1055693">
        <id>O75771</id>
        <label>RAD51D</label>
    </interactant>
    <organismsDiffer>false</organismsDiffer>
    <experiments>3</experiments>
</comment>
<comment type="interaction">
    <interactant intactId="EBI-740841">
        <id>Q8N5R6</id>
    </interactant>
    <interactant intactId="EBI-347161">
        <id>P84022</id>
        <label>SMAD3</label>
    </interactant>
    <organismsDiffer>false</organismsDiffer>
    <experiments>4</experiments>
</comment>
<comment type="alternative products">
    <event type="alternative splicing"/>
    <isoform>
        <id>Q8N5R6-1</id>
        <name>1</name>
        <sequence type="displayed"/>
    </isoform>
    <isoform>
        <id>Q8N5R6-2</id>
        <name>2</name>
        <sequence type="described" ref="VSP_028757 VSP_028758"/>
    </isoform>
    <isoform>
        <id>Q8N5R6-4</id>
        <name>4</name>
        <sequence type="described" ref="VSP_028755 VSP_028756 VSP_028759"/>
    </isoform>
    <isoform>
        <id>Q8N5R6-5</id>
        <name>5</name>
        <sequence type="described" ref="VSP_028755 VSP_028756 VSP_028757 VSP_028759"/>
    </isoform>
    <isoform>
        <id>Q8N5R6-6</id>
        <name>6</name>
        <sequence type="described" ref="VSP_040258 VSP_040259"/>
    </isoform>
</comment>